<keyword id="KW-0413">Isomerase</keyword>
<keyword id="KW-0460">Magnesium</keyword>
<keyword id="KW-0479">Metal-binding</keyword>
<keyword id="KW-0597">Phosphoprotein</keyword>
<proteinExistence type="inferred from homology"/>
<evidence type="ECO:0000255" key="1">
    <source>
        <dbReference type="HAMAP-Rule" id="MF_01554"/>
    </source>
</evidence>
<name>GLMM_CLOP1</name>
<reference key="1">
    <citation type="journal article" date="2006" name="Genome Res.">
        <title>Skewed genomic variability in strains of the toxigenic bacterial pathogen, Clostridium perfringens.</title>
        <authorList>
            <person name="Myers G.S.A."/>
            <person name="Rasko D.A."/>
            <person name="Cheung J.K."/>
            <person name="Ravel J."/>
            <person name="Seshadri R."/>
            <person name="DeBoy R.T."/>
            <person name="Ren Q."/>
            <person name="Varga J."/>
            <person name="Awad M.M."/>
            <person name="Brinkac L.M."/>
            <person name="Daugherty S.C."/>
            <person name="Haft D.H."/>
            <person name="Dodson R.J."/>
            <person name="Madupu R."/>
            <person name="Nelson W.C."/>
            <person name="Rosovitz M.J."/>
            <person name="Sullivan S.A."/>
            <person name="Khouri H."/>
            <person name="Dimitrov G.I."/>
            <person name="Watkins K.L."/>
            <person name="Mulligan S."/>
            <person name="Benton J."/>
            <person name="Radune D."/>
            <person name="Fisher D.J."/>
            <person name="Atkins H.S."/>
            <person name="Hiscox T."/>
            <person name="Jost B.H."/>
            <person name="Billington S.J."/>
            <person name="Songer J.G."/>
            <person name="McClane B.A."/>
            <person name="Titball R.W."/>
            <person name="Rood J.I."/>
            <person name="Melville S.B."/>
            <person name="Paulsen I.T."/>
        </authorList>
    </citation>
    <scope>NUCLEOTIDE SEQUENCE [LARGE SCALE GENOMIC DNA]</scope>
    <source>
        <strain>ATCC 13124 / DSM 756 / JCM 1290 / NCIMB 6125 / NCTC 8237 / S 107 / Type A</strain>
    </source>
</reference>
<accession>Q0TMX1</accession>
<gene>
    <name evidence="1" type="primary">glmM</name>
    <name type="ordered locus">CPF_2638</name>
</gene>
<protein>
    <recommendedName>
        <fullName evidence="1">Phosphoglucosamine mutase</fullName>
        <ecNumber evidence="1">5.4.2.10</ecNumber>
    </recommendedName>
</protein>
<dbReference type="EC" id="5.4.2.10" evidence="1"/>
<dbReference type="EMBL" id="CP000246">
    <property type="protein sequence ID" value="ABG84317.1"/>
    <property type="molecule type" value="Genomic_DNA"/>
</dbReference>
<dbReference type="RefSeq" id="WP_003457908.1">
    <property type="nucleotide sequence ID" value="NC_008261.1"/>
</dbReference>
<dbReference type="SMR" id="Q0TMX1"/>
<dbReference type="STRING" id="195103.CPF_2638"/>
<dbReference type="PaxDb" id="195103-CPF_2638"/>
<dbReference type="KEGG" id="cpf:CPF_2638"/>
<dbReference type="eggNOG" id="COG1109">
    <property type="taxonomic scope" value="Bacteria"/>
</dbReference>
<dbReference type="HOGENOM" id="CLU_016950_7_0_9"/>
<dbReference type="Proteomes" id="UP000001823">
    <property type="component" value="Chromosome"/>
</dbReference>
<dbReference type="GO" id="GO:0005829">
    <property type="term" value="C:cytosol"/>
    <property type="evidence" value="ECO:0007669"/>
    <property type="project" value="TreeGrafter"/>
</dbReference>
<dbReference type="GO" id="GO:0000287">
    <property type="term" value="F:magnesium ion binding"/>
    <property type="evidence" value="ECO:0007669"/>
    <property type="project" value="UniProtKB-UniRule"/>
</dbReference>
<dbReference type="GO" id="GO:0008966">
    <property type="term" value="F:phosphoglucosamine mutase activity"/>
    <property type="evidence" value="ECO:0007669"/>
    <property type="project" value="UniProtKB-UniRule"/>
</dbReference>
<dbReference type="GO" id="GO:0004615">
    <property type="term" value="F:phosphomannomutase activity"/>
    <property type="evidence" value="ECO:0007669"/>
    <property type="project" value="TreeGrafter"/>
</dbReference>
<dbReference type="GO" id="GO:0005975">
    <property type="term" value="P:carbohydrate metabolic process"/>
    <property type="evidence" value="ECO:0007669"/>
    <property type="project" value="InterPro"/>
</dbReference>
<dbReference type="GO" id="GO:0009252">
    <property type="term" value="P:peptidoglycan biosynthetic process"/>
    <property type="evidence" value="ECO:0007669"/>
    <property type="project" value="TreeGrafter"/>
</dbReference>
<dbReference type="GO" id="GO:0006048">
    <property type="term" value="P:UDP-N-acetylglucosamine biosynthetic process"/>
    <property type="evidence" value="ECO:0007669"/>
    <property type="project" value="TreeGrafter"/>
</dbReference>
<dbReference type="CDD" id="cd05802">
    <property type="entry name" value="GlmM"/>
    <property type="match status" value="1"/>
</dbReference>
<dbReference type="FunFam" id="3.30.310.50:FF:000001">
    <property type="entry name" value="Phosphoglucosamine mutase"/>
    <property type="match status" value="1"/>
</dbReference>
<dbReference type="FunFam" id="3.40.120.10:FF:000001">
    <property type="entry name" value="Phosphoglucosamine mutase"/>
    <property type="match status" value="1"/>
</dbReference>
<dbReference type="FunFam" id="3.40.120.10:FF:000002">
    <property type="entry name" value="Phosphoglucosamine mutase"/>
    <property type="match status" value="1"/>
</dbReference>
<dbReference type="Gene3D" id="3.40.120.10">
    <property type="entry name" value="Alpha-D-Glucose-1,6-Bisphosphate, subunit A, domain 3"/>
    <property type="match status" value="3"/>
</dbReference>
<dbReference type="Gene3D" id="3.30.310.50">
    <property type="entry name" value="Alpha-D-phosphohexomutase, C-terminal domain"/>
    <property type="match status" value="1"/>
</dbReference>
<dbReference type="HAMAP" id="MF_01554_B">
    <property type="entry name" value="GlmM_B"/>
    <property type="match status" value="1"/>
</dbReference>
<dbReference type="InterPro" id="IPR005844">
    <property type="entry name" value="A-D-PHexomutase_a/b/a-I"/>
</dbReference>
<dbReference type="InterPro" id="IPR016055">
    <property type="entry name" value="A-D-PHexomutase_a/b/a-I/II/III"/>
</dbReference>
<dbReference type="InterPro" id="IPR005845">
    <property type="entry name" value="A-D-PHexomutase_a/b/a-II"/>
</dbReference>
<dbReference type="InterPro" id="IPR005846">
    <property type="entry name" value="A-D-PHexomutase_a/b/a-III"/>
</dbReference>
<dbReference type="InterPro" id="IPR005843">
    <property type="entry name" value="A-D-PHexomutase_C"/>
</dbReference>
<dbReference type="InterPro" id="IPR036900">
    <property type="entry name" value="A-D-PHexomutase_C_sf"/>
</dbReference>
<dbReference type="InterPro" id="IPR016066">
    <property type="entry name" value="A-D-PHexomutase_CS"/>
</dbReference>
<dbReference type="InterPro" id="IPR005841">
    <property type="entry name" value="Alpha-D-phosphohexomutase_SF"/>
</dbReference>
<dbReference type="InterPro" id="IPR006352">
    <property type="entry name" value="GlmM_bact"/>
</dbReference>
<dbReference type="InterPro" id="IPR050060">
    <property type="entry name" value="Phosphoglucosamine_mutase"/>
</dbReference>
<dbReference type="NCBIfam" id="TIGR01455">
    <property type="entry name" value="glmM"/>
    <property type="match status" value="1"/>
</dbReference>
<dbReference type="NCBIfam" id="NF008139">
    <property type="entry name" value="PRK10887.1"/>
    <property type="match status" value="1"/>
</dbReference>
<dbReference type="PANTHER" id="PTHR42946:SF1">
    <property type="entry name" value="PHOSPHOGLUCOMUTASE (ALPHA-D-GLUCOSE-1,6-BISPHOSPHATE-DEPENDENT)"/>
    <property type="match status" value="1"/>
</dbReference>
<dbReference type="PANTHER" id="PTHR42946">
    <property type="entry name" value="PHOSPHOHEXOSE MUTASE"/>
    <property type="match status" value="1"/>
</dbReference>
<dbReference type="Pfam" id="PF02878">
    <property type="entry name" value="PGM_PMM_I"/>
    <property type="match status" value="1"/>
</dbReference>
<dbReference type="Pfam" id="PF02879">
    <property type="entry name" value="PGM_PMM_II"/>
    <property type="match status" value="1"/>
</dbReference>
<dbReference type="Pfam" id="PF02880">
    <property type="entry name" value="PGM_PMM_III"/>
    <property type="match status" value="1"/>
</dbReference>
<dbReference type="Pfam" id="PF00408">
    <property type="entry name" value="PGM_PMM_IV"/>
    <property type="match status" value="1"/>
</dbReference>
<dbReference type="PRINTS" id="PR00509">
    <property type="entry name" value="PGMPMM"/>
</dbReference>
<dbReference type="SUPFAM" id="SSF55957">
    <property type="entry name" value="Phosphoglucomutase, C-terminal domain"/>
    <property type="match status" value="1"/>
</dbReference>
<dbReference type="SUPFAM" id="SSF53738">
    <property type="entry name" value="Phosphoglucomutase, first 3 domains"/>
    <property type="match status" value="3"/>
</dbReference>
<dbReference type="PROSITE" id="PS00710">
    <property type="entry name" value="PGM_PMM"/>
    <property type="match status" value="1"/>
</dbReference>
<organism>
    <name type="scientific">Clostridium perfringens (strain ATCC 13124 / DSM 756 / JCM 1290 / NCIMB 6125 / NCTC 8237 / Type A)</name>
    <dbReference type="NCBI Taxonomy" id="195103"/>
    <lineage>
        <taxon>Bacteria</taxon>
        <taxon>Bacillati</taxon>
        <taxon>Bacillota</taxon>
        <taxon>Clostridia</taxon>
        <taxon>Eubacteriales</taxon>
        <taxon>Clostridiaceae</taxon>
        <taxon>Clostridium</taxon>
    </lineage>
</organism>
<feature type="chain" id="PRO_0000301302" description="Phosphoglucosamine mutase">
    <location>
        <begin position="1"/>
        <end position="448"/>
    </location>
</feature>
<feature type="active site" description="Phosphoserine intermediate" evidence="1">
    <location>
        <position position="100"/>
    </location>
</feature>
<feature type="binding site" description="via phosphate group" evidence="1">
    <location>
        <position position="100"/>
    </location>
    <ligand>
        <name>Mg(2+)</name>
        <dbReference type="ChEBI" id="CHEBI:18420"/>
    </ligand>
</feature>
<feature type="binding site" evidence="1">
    <location>
        <position position="240"/>
    </location>
    <ligand>
        <name>Mg(2+)</name>
        <dbReference type="ChEBI" id="CHEBI:18420"/>
    </ligand>
</feature>
<feature type="binding site" evidence="1">
    <location>
        <position position="242"/>
    </location>
    <ligand>
        <name>Mg(2+)</name>
        <dbReference type="ChEBI" id="CHEBI:18420"/>
    </ligand>
</feature>
<feature type="binding site" evidence="1">
    <location>
        <position position="244"/>
    </location>
    <ligand>
        <name>Mg(2+)</name>
        <dbReference type="ChEBI" id="CHEBI:18420"/>
    </ligand>
</feature>
<feature type="modified residue" description="Phosphoserine" evidence="1">
    <location>
        <position position="100"/>
    </location>
</feature>
<sequence>MSRLFGTDGVRGIANTELTAELAYNLGRAGAYVLTEGTHKPKILVAKDTRISGDMLEAALVAGILSVGAEAVCLGVVPTPAVAHLTRVYGADAGVMISASHNPVEYNGIKFFDDKGYKLSDDLEDEIQRVIESGFENVPSPTGANLGREIIEKAALEDYISFAKDTIGISLEGLRVALDCANGASHEAAVRAFRELGAEIFVINDNPDGTNINENCGSTHPEELMEYVVKKKCHMGFAFDGDADRCLAVDEQGNLVDGDFILTICAKYLKELGRLKDDTLVVTVMSNLGLMIACKNEKINTAVTKVGDRYVLEEMLAKGYSLGGEQSGHIIFLDHNSTGDGLVTALQVASIVKRTGKSLFELKNVMKVLPQVLVNAKVPNNMKNIHEEDEEIIAEIKKMEAALDGCGRVLIRPSGTEPLVRVMLEGENQAEIDEMAHNLAKMIEAKCN</sequence>
<comment type="function">
    <text evidence="1">Catalyzes the conversion of glucosamine-6-phosphate to glucosamine-1-phosphate.</text>
</comment>
<comment type="catalytic activity">
    <reaction evidence="1">
        <text>alpha-D-glucosamine 1-phosphate = D-glucosamine 6-phosphate</text>
        <dbReference type="Rhea" id="RHEA:23424"/>
        <dbReference type="ChEBI" id="CHEBI:58516"/>
        <dbReference type="ChEBI" id="CHEBI:58725"/>
        <dbReference type="EC" id="5.4.2.10"/>
    </reaction>
</comment>
<comment type="cofactor">
    <cofactor evidence="1">
        <name>Mg(2+)</name>
        <dbReference type="ChEBI" id="CHEBI:18420"/>
    </cofactor>
    <text evidence="1">Binds 1 Mg(2+) ion per subunit.</text>
</comment>
<comment type="PTM">
    <text evidence="1">Activated by phosphorylation.</text>
</comment>
<comment type="similarity">
    <text evidence="1">Belongs to the phosphohexose mutase family.</text>
</comment>